<comment type="function">
    <text evidence="1">N4-methylcytidine (m4C) methyltransferase responsible for the methylation of position C839 in mitochondrial 12S rRNA. Involved in the stabilization of 12S rRNA folding, therefore facilitating the assembly of the mitochondrial small ribosomal subunits.</text>
</comment>
<comment type="catalytic activity">
    <reaction evidence="1">
        <text>cytidine(839) in 12S rRNA + S-adenosyl-L-methionine = N(4)-methylcytidine(839) in 12S rRNA + S-adenosyl-L-homocysteine + H(+)</text>
        <dbReference type="Rhea" id="RHEA:62524"/>
        <dbReference type="Rhea" id="RHEA-COMP:16109"/>
        <dbReference type="Rhea" id="RHEA-COMP:16110"/>
        <dbReference type="ChEBI" id="CHEBI:15378"/>
        <dbReference type="ChEBI" id="CHEBI:57856"/>
        <dbReference type="ChEBI" id="CHEBI:59789"/>
        <dbReference type="ChEBI" id="CHEBI:74506"/>
        <dbReference type="ChEBI" id="CHEBI:82748"/>
    </reaction>
    <physiologicalReaction direction="left-to-right" evidence="1">
        <dbReference type="Rhea" id="RHEA:62525"/>
    </physiologicalReaction>
</comment>
<comment type="subcellular location">
    <subcellularLocation>
        <location evidence="1">Mitochondrion matrix</location>
    </subcellularLocation>
</comment>
<comment type="similarity">
    <text evidence="4">Belongs to the methyltransferase superfamily. RsmH family.</text>
</comment>
<keyword id="KW-0489">Methyltransferase</keyword>
<keyword id="KW-0496">Mitochondrion</keyword>
<keyword id="KW-0597">Phosphoprotein</keyword>
<keyword id="KW-1185">Reference proteome</keyword>
<keyword id="KW-0949">S-adenosyl-L-methionine</keyword>
<keyword id="KW-0808">Transferase</keyword>
<keyword id="KW-0809">Transit peptide</keyword>
<proteinExistence type="evidence at transcript level"/>
<organism>
    <name type="scientific">Pongo abelii</name>
    <name type="common">Sumatran orangutan</name>
    <name type="synonym">Pongo pygmaeus abelii</name>
    <dbReference type="NCBI Taxonomy" id="9601"/>
    <lineage>
        <taxon>Eukaryota</taxon>
        <taxon>Metazoa</taxon>
        <taxon>Chordata</taxon>
        <taxon>Craniata</taxon>
        <taxon>Vertebrata</taxon>
        <taxon>Euteleostomi</taxon>
        <taxon>Mammalia</taxon>
        <taxon>Eutheria</taxon>
        <taxon>Euarchontoglires</taxon>
        <taxon>Primates</taxon>
        <taxon>Haplorrhini</taxon>
        <taxon>Catarrhini</taxon>
        <taxon>Hominidae</taxon>
        <taxon>Pongo</taxon>
    </lineage>
</organism>
<evidence type="ECO:0000250" key="1">
    <source>
        <dbReference type="UniProtKB" id="A6NJ78"/>
    </source>
</evidence>
<evidence type="ECO:0000250" key="2">
    <source>
        <dbReference type="UniProtKB" id="Q9WZX6"/>
    </source>
</evidence>
<evidence type="ECO:0000255" key="3"/>
<evidence type="ECO:0000305" key="4"/>
<accession>Q5R5T5</accession>
<feature type="transit peptide" description="Mitochondrion" evidence="3">
    <location>
        <begin position="1"/>
        <end status="unknown"/>
    </location>
</feature>
<feature type="chain" id="PRO_0000308334" description="12S rRNA N(4)-cytidine methyltransferase METTL15">
    <location>
        <begin status="unknown"/>
        <end position="407"/>
    </location>
</feature>
<feature type="binding site" evidence="2">
    <location>
        <begin position="100"/>
        <end position="102"/>
    </location>
    <ligand>
        <name>S-adenosyl-L-methionine</name>
        <dbReference type="ChEBI" id="CHEBI:59789"/>
    </ligand>
</feature>
<feature type="binding site" evidence="2">
    <location>
        <position position="119"/>
    </location>
    <ligand>
        <name>S-adenosyl-L-methionine</name>
        <dbReference type="ChEBI" id="CHEBI:59789"/>
    </ligand>
</feature>
<feature type="binding site" evidence="2">
    <location>
        <position position="146"/>
    </location>
    <ligand>
        <name>S-adenosyl-L-methionine</name>
        <dbReference type="ChEBI" id="CHEBI:59789"/>
    </ligand>
</feature>
<feature type="binding site" evidence="2">
    <location>
        <position position="169"/>
    </location>
    <ligand>
        <name>S-adenosyl-L-methionine</name>
        <dbReference type="ChEBI" id="CHEBI:59789"/>
    </ligand>
</feature>
<feature type="binding site" evidence="2">
    <location>
        <position position="176"/>
    </location>
    <ligand>
        <name>S-adenosyl-L-methionine</name>
        <dbReference type="ChEBI" id="CHEBI:59789"/>
    </ligand>
</feature>
<feature type="modified residue" description="Phosphoserine" evidence="1">
    <location>
        <position position="358"/>
    </location>
</feature>
<protein>
    <recommendedName>
        <fullName>12S rRNA N(4)-cytidine methyltransferase METTL15</fullName>
        <shortName>12S rRNA m4C methyltransferase</shortName>
        <ecNumber>2.1.1.-</ecNumber>
    </recommendedName>
    <alternativeName>
        <fullName>Methyltransferase 5 domain-containing protein 1</fullName>
    </alternativeName>
    <alternativeName>
        <fullName>Methyltransferase-like protein 15</fullName>
    </alternativeName>
</protein>
<reference key="1">
    <citation type="submission" date="2004-11" db="EMBL/GenBank/DDBJ databases">
        <authorList>
            <consortium name="The German cDNA consortium"/>
        </authorList>
    </citation>
    <scope>NUCLEOTIDE SEQUENCE [LARGE SCALE MRNA]</scope>
    <source>
        <tissue>Brain cortex</tissue>
    </source>
</reference>
<name>MET15_PONAB</name>
<dbReference type="EC" id="2.1.1.-"/>
<dbReference type="EMBL" id="CR860768">
    <property type="protein sequence ID" value="CAH92881.1"/>
    <property type="molecule type" value="mRNA"/>
</dbReference>
<dbReference type="RefSeq" id="NP_001126687.1">
    <property type="nucleotide sequence ID" value="NM_001133215.1"/>
</dbReference>
<dbReference type="SMR" id="Q5R5T5"/>
<dbReference type="FunCoup" id="Q5R5T5">
    <property type="interactions" value="1549"/>
</dbReference>
<dbReference type="STRING" id="9601.ENSPPYP00000003901"/>
<dbReference type="GeneID" id="100173687"/>
<dbReference type="KEGG" id="pon:100173687"/>
<dbReference type="CTD" id="196074"/>
<dbReference type="eggNOG" id="KOG2782">
    <property type="taxonomic scope" value="Eukaryota"/>
</dbReference>
<dbReference type="InParanoid" id="Q5R5T5"/>
<dbReference type="OrthoDB" id="16290at2759"/>
<dbReference type="Proteomes" id="UP000001595">
    <property type="component" value="Unplaced"/>
</dbReference>
<dbReference type="GO" id="GO:0005759">
    <property type="term" value="C:mitochondrial matrix"/>
    <property type="evidence" value="ECO:0007669"/>
    <property type="project" value="UniProtKB-SubCell"/>
</dbReference>
<dbReference type="GO" id="GO:0071424">
    <property type="term" value="F:rRNA (cytosine-N4-)-methyltransferase activity"/>
    <property type="evidence" value="ECO:0007669"/>
    <property type="project" value="TreeGrafter"/>
</dbReference>
<dbReference type="GO" id="GO:0070475">
    <property type="term" value="P:rRNA base methylation"/>
    <property type="evidence" value="ECO:0007669"/>
    <property type="project" value="TreeGrafter"/>
</dbReference>
<dbReference type="FunFam" id="3.40.50.150:FF:000776">
    <property type="entry name" value="Methyltransferase like 15"/>
    <property type="match status" value="1"/>
</dbReference>
<dbReference type="FunFam" id="1.10.150.170:FF:000002">
    <property type="entry name" value="Probable methyltransferase-like protein 15"/>
    <property type="match status" value="1"/>
</dbReference>
<dbReference type="FunFam" id="3.40.50.150:FF:000226">
    <property type="entry name" value="probable methyltransferase-like protein 15 isoform X3"/>
    <property type="match status" value="1"/>
</dbReference>
<dbReference type="Gene3D" id="1.10.150.170">
    <property type="entry name" value="Putative methyltransferase TM0872, insert domain"/>
    <property type="match status" value="1"/>
</dbReference>
<dbReference type="Gene3D" id="3.40.50.150">
    <property type="entry name" value="Vaccinia Virus protein VP39"/>
    <property type="match status" value="1"/>
</dbReference>
<dbReference type="HAMAP" id="MF_01007">
    <property type="entry name" value="16SrRNA_methyltr_H"/>
    <property type="match status" value="1"/>
</dbReference>
<dbReference type="InterPro" id="IPR002903">
    <property type="entry name" value="RsmH"/>
</dbReference>
<dbReference type="InterPro" id="IPR023397">
    <property type="entry name" value="SAM-dep_MeTrfase_MraW_recog"/>
</dbReference>
<dbReference type="InterPro" id="IPR029063">
    <property type="entry name" value="SAM-dependent_MTases_sf"/>
</dbReference>
<dbReference type="NCBIfam" id="TIGR00006">
    <property type="entry name" value="16S rRNA (cytosine(1402)-N(4))-methyltransferase RsmH"/>
    <property type="match status" value="1"/>
</dbReference>
<dbReference type="PANTHER" id="PTHR11265:SF0">
    <property type="entry name" value="12S RRNA N4-METHYLCYTIDINE METHYLTRANSFERASE"/>
    <property type="match status" value="1"/>
</dbReference>
<dbReference type="PANTHER" id="PTHR11265">
    <property type="entry name" value="S-ADENOSYL-METHYLTRANSFERASE MRAW"/>
    <property type="match status" value="1"/>
</dbReference>
<dbReference type="Pfam" id="PF01795">
    <property type="entry name" value="Methyltransf_5"/>
    <property type="match status" value="1"/>
</dbReference>
<dbReference type="SUPFAM" id="SSF81799">
    <property type="entry name" value="Putative methyltransferase TM0872, insert domain"/>
    <property type="match status" value="1"/>
</dbReference>
<dbReference type="SUPFAM" id="SSF53335">
    <property type="entry name" value="S-adenosyl-L-methionine-dependent methyltransferases"/>
    <property type="match status" value="1"/>
</dbReference>
<gene>
    <name type="primary">METTL15</name>
    <name type="synonym">METT5D1</name>
</gene>
<sequence length="407" mass="46169">MIRYPYFCRMYKECLSCWLESGIPNLGVWPKTIHTTAEKYREYEAREQTDQTQAQELHRSQDRDFETMAKLHIPVMVDEVLHCLSPQKGQIFLDMTFGSGGHTKAILQKESDIVLYALDRDPTAYALAEHLSELYPKQIRAMLGQFSQAETLLMKAGVQPGTFDGVLMDLGCSSMQLDTPERGFSLRKDGPLDMRMDGGRYPDMPTAADVVNAFDQQALASILRTYGEEKHAKKIASAIVQARSIYPITRTQQLASIVAGAFPPSAIYARKDLLQRSTHIATKTFQAVRIFVNNELNELYMGLKTAQKFLRPGGRLVALSFHSLEDRIIKRFLLGISMTERFNLSVRQQVMKTSQLGSDHENTEEVSKRRAPLMWELIHKKVLSPQDQDVQDNPRARSAKLRAAIKL</sequence>